<sequence length="310" mass="34016">MRTHDDTWDIKTSVGATAVMVAAARAVETDRPDPLIRDPYARLLVTNAGAGAIWEAMLDPTLVAKAAAIDAETAAIVAYLRSYQAVRTNFFDTYFASAVAAGIRQVVILASGLDSRAYRLDWPAGTIVYEIDQPKVLSYKSTTLAENGVTPSAGRREVPADLRQDWPAALRDAGFDPTARTAWLAEGLLMYLPAEAQDRLFTQVGAVSVAGSRIAAETAPVHGEERRAEMRARFKKVADVLGIEQTIDVQELVYHDQDRASVADWLTDHGWRARSQRAPDEMRRVGRWVEGVPMADDPTAFAEFVTAERL</sequence>
<reference key="1">
    <citation type="journal article" date="2003" name="Proc. Natl. Acad. Sci. U.S.A.">
        <title>The complete genome sequence of Mycobacterium bovis.</title>
        <authorList>
            <person name="Garnier T."/>
            <person name="Eiglmeier K."/>
            <person name="Camus J.-C."/>
            <person name="Medina N."/>
            <person name="Mansoor H."/>
            <person name="Pryor M."/>
            <person name="Duthoy S."/>
            <person name="Grondin S."/>
            <person name="Lacroix C."/>
            <person name="Monsempe C."/>
            <person name="Simon S."/>
            <person name="Harris B."/>
            <person name="Atkin R."/>
            <person name="Doggett J."/>
            <person name="Mayes R."/>
            <person name="Keating L."/>
            <person name="Wheeler P.R."/>
            <person name="Parkhill J."/>
            <person name="Barrell B.G."/>
            <person name="Cole S.T."/>
            <person name="Gordon S.V."/>
            <person name="Hewinson R.G."/>
        </authorList>
    </citation>
    <scope>NUCLEOTIDE SEQUENCE [LARGE SCALE GENOMIC DNA]</scope>
    <source>
        <strain>ATCC BAA-935 / AF2122/97</strain>
    </source>
</reference>
<reference key="2">
    <citation type="journal article" date="2017" name="Genome Announc.">
        <title>Updated reference genome sequence and annotation of Mycobacterium bovis AF2122/97.</title>
        <authorList>
            <person name="Malone K.M."/>
            <person name="Farrell D."/>
            <person name="Stuber T.P."/>
            <person name="Schubert O.T."/>
            <person name="Aebersold R."/>
            <person name="Robbe-Austerman S."/>
            <person name="Gordon S.V."/>
        </authorList>
    </citation>
    <scope>NUCLEOTIDE SEQUENCE [LARGE SCALE GENOMIC DNA]</scope>
    <scope>GENOME REANNOTATION</scope>
    <source>
        <strain>ATCC BAA-935 / AF2122/97</strain>
    </source>
</reference>
<name>Y151_MYCBO</name>
<organism>
    <name type="scientific">Mycobacterium bovis (strain ATCC BAA-935 / AF2122/97)</name>
    <dbReference type="NCBI Taxonomy" id="233413"/>
    <lineage>
        <taxon>Bacteria</taxon>
        <taxon>Bacillati</taxon>
        <taxon>Actinomycetota</taxon>
        <taxon>Actinomycetes</taxon>
        <taxon>Mycobacteriales</taxon>
        <taxon>Mycobacteriaceae</taxon>
        <taxon>Mycobacterium</taxon>
        <taxon>Mycobacterium tuberculosis complex</taxon>
    </lineage>
</organism>
<protein>
    <recommendedName>
        <fullName>Putative S-adenosyl-L-methionine-dependent methyltransferase Mb0151</fullName>
        <ecNumber>2.1.1.-</ecNumber>
    </recommendedName>
</protein>
<feature type="chain" id="PRO_0000361131" description="Putative S-adenosyl-L-methionine-dependent methyltransferase Mb0151">
    <location>
        <begin position="1"/>
        <end position="310"/>
    </location>
</feature>
<feature type="binding site" evidence="1">
    <location>
        <position position="132"/>
    </location>
    <ligand>
        <name>S-adenosyl-L-methionine</name>
        <dbReference type="ChEBI" id="CHEBI:59789"/>
    </ligand>
</feature>
<feature type="binding site" evidence="1">
    <location>
        <begin position="161"/>
        <end position="162"/>
    </location>
    <ligand>
        <name>S-adenosyl-L-methionine</name>
        <dbReference type="ChEBI" id="CHEBI:59789"/>
    </ligand>
</feature>
<gene>
    <name type="ordered locus">BQ2027_MB0151</name>
</gene>
<proteinExistence type="inferred from homology"/>
<comment type="function">
    <text evidence="1">Exhibits S-adenosyl-L-methionine-dependent methyltransferase activity.</text>
</comment>
<comment type="similarity">
    <text evidence="2">Belongs to the UPF0677 family.</text>
</comment>
<keyword id="KW-0489">Methyltransferase</keyword>
<keyword id="KW-1185">Reference proteome</keyword>
<keyword id="KW-0949">S-adenosyl-L-methionine</keyword>
<keyword id="KW-0808">Transferase</keyword>
<accession>Q7U2R2</accession>
<accession>A0A1R3XV23</accession>
<accession>X2BE60</accession>
<evidence type="ECO:0000250" key="1"/>
<evidence type="ECO:0000305" key="2"/>
<dbReference type="EC" id="2.1.1.-"/>
<dbReference type="EMBL" id="LT708304">
    <property type="protein sequence ID" value="SIT98589.1"/>
    <property type="molecule type" value="Genomic_DNA"/>
</dbReference>
<dbReference type="RefSeq" id="NP_853817.1">
    <property type="nucleotide sequence ID" value="NC_002945.3"/>
</dbReference>
<dbReference type="RefSeq" id="WP_003900814.1">
    <property type="nucleotide sequence ID" value="NC_002945.4"/>
</dbReference>
<dbReference type="SMR" id="Q7U2R2"/>
<dbReference type="PATRIC" id="fig|233413.5.peg.172"/>
<dbReference type="Proteomes" id="UP000001419">
    <property type="component" value="Chromosome"/>
</dbReference>
<dbReference type="GO" id="GO:0008168">
    <property type="term" value="F:methyltransferase activity"/>
    <property type="evidence" value="ECO:0007669"/>
    <property type="project" value="UniProtKB-KW"/>
</dbReference>
<dbReference type="GO" id="GO:0032259">
    <property type="term" value="P:methylation"/>
    <property type="evidence" value="ECO:0007669"/>
    <property type="project" value="UniProtKB-KW"/>
</dbReference>
<dbReference type="FunFam" id="3.40.50.150:FF:000152">
    <property type="entry name" value="S-adenosyl-L-methionine-dependent methyltransferase"/>
    <property type="match status" value="1"/>
</dbReference>
<dbReference type="Gene3D" id="3.40.50.150">
    <property type="entry name" value="Vaccinia Virus protein VP39"/>
    <property type="match status" value="1"/>
</dbReference>
<dbReference type="InterPro" id="IPR007213">
    <property type="entry name" value="Ppm1/Ppm2/Tcmp"/>
</dbReference>
<dbReference type="InterPro" id="IPR029063">
    <property type="entry name" value="SAM-dependent_MTases_sf"/>
</dbReference>
<dbReference type="InterPro" id="IPR011610">
    <property type="entry name" value="SAM_mthyl_Trfase_ML2640-like"/>
</dbReference>
<dbReference type="NCBIfam" id="TIGR00027">
    <property type="entry name" value="mthyl_TIGR00027"/>
    <property type="match status" value="1"/>
</dbReference>
<dbReference type="PANTHER" id="PTHR43619">
    <property type="entry name" value="S-ADENOSYL-L-METHIONINE-DEPENDENT METHYLTRANSFERASE YKTD-RELATED"/>
    <property type="match status" value="1"/>
</dbReference>
<dbReference type="PANTHER" id="PTHR43619:SF2">
    <property type="entry name" value="S-ADENOSYL-L-METHIONINE-DEPENDENT METHYLTRANSFERASES SUPERFAMILY PROTEIN"/>
    <property type="match status" value="1"/>
</dbReference>
<dbReference type="Pfam" id="PF04072">
    <property type="entry name" value="LCM"/>
    <property type="match status" value="1"/>
</dbReference>
<dbReference type="SUPFAM" id="SSF53335">
    <property type="entry name" value="S-adenosyl-L-methionine-dependent methyltransferases"/>
    <property type="match status" value="1"/>
</dbReference>